<organism>
    <name type="scientific">Burkholderia thailandensis (strain ATCC 700388 / DSM 13276 / CCUG 48851 / CIP 106301 / E264)</name>
    <dbReference type="NCBI Taxonomy" id="271848"/>
    <lineage>
        <taxon>Bacteria</taxon>
        <taxon>Pseudomonadati</taxon>
        <taxon>Pseudomonadota</taxon>
        <taxon>Betaproteobacteria</taxon>
        <taxon>Burkholderiales</taxon>
        <taxon>Burkholderiaceae</taxon>
        <taxon>Burkholderia</taxon>
        <taxon>pseudomallei group</taxon>
    </lineage>
</organism>
<protein>
    <recommendedName>
        <fullName evidence="1">UPF0502 protein BTH_II0990</fullName>
    </recommendedName>
</protein>
<sequence>MNSTPDAFQRPAIRALTPLEARVLGVLIEKQHTVPDTYPLSLNALTAGCNQKTARSPVMNVSEAEVLTSIDGLKRLSLASEGSSSRVPRFEHNMNRVLGIPSQAAALLTMLLLRGPQTAAELRLNTARLHGFADISSVEAFLDELAARAPALVVKLPRAPGERESRWMHLLCGDVALDEALAHGVQEDAVPPSEFEALKAEQKALTAELARLRAFVEYMANELGIDADKFTRES</sequence>
<proteinExistence type="inferred from homology"/>
<gene>
    <name type="ordered locus">BTH_II0990</name>
</gene>
<evidence type="ECO:0000255" key="1">
    <source>
        <dbReference type="HAMAP-Rule" id="MF_01584"/>
    </source>
</evidence>
<reference key="1">
    <citation type="journal article" date="2005" name="BMC Genomics">
        <title>Bacterial genome adaptation to niches: divergence of the potential virulence genes in three Burkholderia species of different survival strategies.</title>
        <authorList>
            <person name="Kim H.S."/>
            <person name="Schell M.A."/>
            <person name="Yu Y."/>
            <person name="Ulrich R.L."/>
            <person name="Sarria S.H."/>
            <person name="Nierman W.C."/>
            <person name="DeShazer D."/>
        </authorList>
    </citation>
    <scope>NUCLEOTIDE SEQUENCE [LARGE SCALE GENOMIC DNA]</scope>
    <source>
        <strain>ATCC 700388 / DSM 13276 / CCUG 48851 / CIP 106301 / E264</strain>
    </source>
</reference>
<accession>Q2T6L2</accession>
<feature type="chain" id="PRO_0000309379" description="UPF0502 protein BTH_II0990">
    <location>
        <begin position="1"/>
        <end position="234"/>
    </location>
</feature>
<comment type="similarity">
    <text evidence="1">Belongs to the UPF0502 family.</text>
</comment>
<name>Y4390_BURTA</name>
<dbReference type="EMBL" id="CP000085">
    <property type="protein sequence ID" value="ABC36008.1"/>
    <property type="molecule type" value="Genomic_DNA"/>
</dbReference>
<dbReference type="RefSeq" id="WP_009896426.1">
    <property type="nucleotide sequence ID" value="NZ_CP008786.1"/>
</dbReference>
<dbReference type="SMR" id="Q2T6L2"/>
<dbReference type="GeneID" id="45118459"/>
<dbReference type="KEGG" id="bte:BTH_II0990"/>
<dbReference type="HOGENOM" id="CLU_057831_0_0_4"/>
<dbReference type="Proteomes" id="UP000001930">
    <property type="component" value="Chromosome II"/>
</dbReference>
<dbReference type="Gene3D" id="1.10.10.10">
    <property type="entry name" value="Winged helix-like DNA-binding domain superfamily/Winged helix DNA-binding domain"/>
    <property type="match status" value="2"/>
</dbReference>
<dbReference type="HAMAP" id="MF_01584">
    <property type="entry name" value="UPF0502"/>
    <property type="match status" value="1"/>
</dbReference>
<dbReference type="InterPro" id="IPR007432">
    <property type="entry name" value="DUF480"/>
</dbReference>
<dbReference type="InterPro" id="IPR036388">
    <property type="entry name" value="WH-like_DNA-bd_sf"/>
</dbReference>
<dbReference type="InterPro" id="IPR036390">
    <property type="entry name" value="WH_DNA-bd_sf"/>
</dbReference>
<dbReference type="PANTHER" id="PTHR38768">
    <property type="entry name" value="UPF0502 PROTEIN YCEH"/>
    <property type="match status" value="1"/>
</dbReference>
<dbReference type="PANTHER" id="PTHR38768:SF1">
    <property type="entry name" value="UPF0502 PROTEIN YCEH"/>
    <property type="match status" value="1"/>
</dbReference>
<dbReference type="Pfam" id="PF04337">
    <property type="entry name" value="DUF480"/>
    <property type="match status" value="1"/>
</dbReference>
<dbReference type="SUPFAM" id="SSF46785">
    <property type="entry name" value="Winged helix' DNA-binding domain"/>
    <property type="match status" value="2"/>
</dbReference>